<feature type="chain" id="PRO_0000287842" description="NADH-quinone oxidoreductase subunit G">
    <location>
        <begin position="1"/>
        <end position="681"/>
    </location>
</feature>
<feature type="domain" description="2Fe-2S ferredoxin-type" evidence="2">
    <location>
        <begin position="1"/>
        <end position="78"/>
    </location>
</feature>
<feature type="domain" description="4Fe-4S His(Cys)3-ligated-type" evidence="4">
    <location>
        <begin position="78"/>
        <end position="117"/>
    </location>
</feature>
<feature type="domain" description="4Fe-4S Mo/W bis-MGD-type" evidence="3">
    <location>
        <begin position="215"/>
        <end position="271"/>
    </location>
</feature>
<feature type="binding site" evidence="1">
    <location>
        <position position="34"/>
    </location>
    <ligand>
        <name>[2Fe-2S] cluster</name>
        <dbReference type="ChEBI" id="CHEBI:190135"/>
    </ligand>
</feature>
<feature type="binding site" evidence="1">
    <location>
        <position position="45"/>
    </location>
    <ligand>
        <name>[2Fe-2S] cluster</name>
        <dbReference type="ChEBI" id="CHEBI:190135"/>
    </ligand>
</feature>
<feature type="binding site" evidence="1">
    <location>
        <position position="48"/>
    </location>
    <ligand>
        <name>[2Fe-2S] cluster</name>
        <dbReference type="ChEBI" id="CHEBI:190135"/>
    </ligand>
</feature>
<feature type="binding site" evidence="1">
    <location>
        <position position="62"/>
    </location>
    <ligand>
        <name>[2Fe-2S] cluster</name>
        <dbReference type="ChEBI" id="CHEBI:190135"/>
    </ligand>
</feature>
<feature type="binding site" evidence="4">
    <location>
        <position position="94"/>
    </location>
    <ligand>
        <name>[4Fe-4S] cluster</name>
        <dbReference type="ChEBI" id="CHEBI:49883"/>
        <label>1</label>
    </ligand>
</feature>
<feature type="binding site" evidence="4">
    <location>
        <position position="98"/>
    </location>
    <ligand>
        <name>[4Fe-4S] cluster</name>
        <dbReference type="ChEBI" id="CHEBI:49883"/>
        <label>1</label>
    </ligand>
</feature>
<feature type="binding site" evidence="4">
    <location>
        <position position="101"/>
    </location>
    <ligand>
        <name>[4Fe-4S] cluster</name>
        <dbReference type="ChEBI" id="CHEBI:49883"/>
        <label>1</label>
    </ligand>
</feature>
<feature type="binding site" evidence="4">
    <location>
        <position position="107"/>
    </location>
    <ligand>
        <name>[4Fe-4S] cluster</name>
        <dbReference type="ChEBI" id="CHEBI:49883"/>
        <label>1</label>
    </ligand>
</feature>
<feature type="binding site" evidence="1">
    <location>
        <position position="146"/>
    </location>
    <ligand>
        <name>[4Fe-4S] cluster</name>
        <dbReference type="ChEBI" id="CHEBI:49883"/>
        <label>2</label>
    </ligand>
</feature>
<feature type="binding site" evidence="1">
    <location>
        <position position="149"/>
    </location>
    <ligand>
        <name>[4Fe-4S] cluster</name>
        <dbReference type="ChEBI" id="CHEBI:49883"/>
        <label>2</label>
    </ligand>
</feature>
<feature type="binding site" evidence="1">
    <location>
        <position position="152"/>
    </location>
    <ligand>
        <name>[4Fe-4S] cluster</name>
        <dbReference type="ChEBI" id="CHEBI:49883"/>
        <label>2</label>
    </ligand>
</feature>
<feature type="binding site" evidence="1">
    <location>
        <position position="196"/>
    </location>
    <ligand>
        <name>[4Fe-4S] cluster</name>
        <dbReference type="ChEBI" id="CHEBI:49883"/>
        <label>2</label>
    </ligand>
</feature>
<proteinExistence type="inferred from homology"/>
<accession>Q1RKD2</accession>
<organism>
    <name type="scientific">Rickettsia bellii (strain RML369-C)</name>
    <dbReference type="NCBI Taxonomy" id="336407"/>
    <lineage>
        <taxon>Bacteria</taxon>
        <taxon>Pseudomonadati</taxon>
        <taxon>Pseudomonadota</taxon>
        <taxon>Alphaproteobacteria</taxon>
        <taxon>Rickettsiales</taxon>
        <taxon>Rickettsiaceae</taxon>
        <taxon>Rickettsieae</taxon>
        <taxon>Rickettsia</taxon>
        <taxon>belli group</taxon>
    </lineage>
</organism>
<gene>
    <name type="primary">nuoG</name>
    <name type="ordered locus">RBE_0101</name>
</gene>
<sequence length="681" mass="76012">MIKLTIDGQEIEVSEGTTVYQACTKAGKEIPHFCYHERLKIAGNCRMCLVEMEKSPKPIASCAMPVGNGMVIHTDTPMVKKAREGVMEFLLVNHPLDCPICDQGGECDLQDQAFRYGKGTNRFHENKRSIKDKYMGPLIKTAMTRCIQCTRCIRFANDIAGIEEMGAIHRGEHMEVTSYLEQTLDSEISGNMIDICPVGALNSKPYAFKARKWELRHTASIGVHDAEGSNIRIDSRGDEVMRVLPRVNEEINEEWLSDKNRFSYDGLKYQRLDQPYIRKNGKLVSASWDEALKAIADKIKSIKPEKITAFAGTLASVEAMFMLKTFLQKIGCNNYNVNQFDYKLDTTQRGNYLFNTTIAGLEKADLCLLIGANPRQIAPVLNSRIGGRVRAGSLKVARIGEGHNQTYKIQDLGSDLKILEELALDEHKFAEELKAAKYPIIIVGDGVYGRNDGHAILSLIHKIVDKYNIMRDDWKGFNILHNHASMVGGFDIGFDTSLGKLEDIELAYLLGADELPFDKLKSAFIVYQGHHGDIGATKADIILPSAAYTEQSGIYVNLEGRPQIAEKAVSPVGKAKEDIAIIKELADCLKLDTLVSNLQEIRTKLAKEYPIFANIGKIIDNKFAKFSSKDKLSKEPITAETINYYMTDVISKNSVTMARCVEAKQEMSSRGLSTGSRKKRE</sequence>
<reference key="1">
    <citation type="journal article" date="2006" name="PLoS Genet.">
        <title>Genome sequence of Rickettsia bellii illuminates the role of amoebae in gene exchanges between intracellular pathogens.</title>
        <authorList>
            <person name="Ogata H."/>
            <person name="La Scola B."/>
            <person name="Audic S."/>
            <person name="Renesto P."/>
            <person name="Blanc G."/>
            <person name="Robert C."/>
            <person name="Fournier P.-E."/>
            <person name="Claverie J.-M."/>
            <person name="Raoult D."/>
        </authorList>
    </citation>
    <scope>NUCLEOTIDE SEQUENCE [LARGE SCALE GENOMIC DNA]</scope>
    <source>
        <strain>RML369-C</strain>
    </source>
</reference>
<dbReference type="EC" id="7.1.1.-"/>
<dbReference type="EMBL" id="CP000087">
    <property type="protein sequence ID" value="ABE04182.1"/>
    <property type="molecule type" value="Genomic_DNA"/>
</dbReference>
<dbReference type="RefSeq" id="WP_011476797.1">
    <property type="nucleotide sequence ID" value="NC_007940.1"/>
</dbReference>
<dbReference type="SMR" id="Q1RKD2"/>
<dbReference type="KEGG" id="rbe:RBE_0101"/>
<dbReference type="eggNOG" id="COG1034">
    <property type="taxonomic scope" value="Bacteria"/>
</dbReference>
<dbReference type="HOGENOM" id="CLU_000422_11_6_5"/>
<dbReference type="OrthoDB" id="9803192at2"/>
<dbReference type="Proteomes" id="UP000001951">
    <property type="component" value="Chromosome"/>
</dbReference>
<dbReference type="GO" id="GO:0016020">
    <property type="term" value="C:membrane"/>
    <property type="evidence" value="ECO:0007669"/>
    <property type="project" value="InterPro"/>
</dbReference>
<dbReference type="GO" id="GO:0051537">
    <property type="term" value="F:2 iron, 2 sulfur cluster binding"/>
    <property type="evidence" value="ECO:0007669"/>
    <property type="project" value="UniProtKB-KW"/>
</dbReference>
<dbReference type="GO" id="GO:0051539">
    <property type="term" value="F:4 iron, 4 sulfur cluster binding"/>
    <property type="evidence" value="ECO:0007669"/>
    <property type="project" value="UniProtKB-KW"/>
</dbReference>
<dbReference type="GO" id="GO:0046872">
    <property type="term" value="F:metal ion binding"/>
    <property type="evidence" value="ECO:0007669"/>
    <property type="project" value="UniProtKB-KW"/>
</dbReference>
<dbReference type="GO" id="GO:0008137">
    <property type="term" value="F:NADH dehydrogenase (ubiquinone) activity"/>
    <property type="evidence" value="ECO:0007669"/>
    <property type="project" value="InterPro"/>
</dbReference>
<dbReference type="GO" id="GO:0048038">
    <property type="term" value="F:quinone binding"/>
    <property type="evidence" value="ECO:0007669"/>
    <property type="project" value="UniProtKB-KW"/>
</dbReference>
<dbReference type="GO" id="GO:0042773">
    <property type="term" value="P:ATP synthesis coupled electron transport"/>
    <property type="evidence" value="ECO:0007669"/>
    <property type="project" value="InterPro"/>
</dbReference>
<dbReference type="CDD" id="cd00207">
    <property type="entry name" value="fer2"/>
    <property type="match status" value="1"/>
</dbReference>
<dbReference type="CDD" id="cd02773">
    <property type="entry name" value="MopB_Res-Cmplx1_Nad11"/>
    <property type="match status" value="1"/>
</dbReference>
<dbReference type="FunFam" id="3.10.20.740:FF:000001">
    <property type="entry name" value="NADH-quinone oxidoreductase subunit G"/>
    <property type="match status" value="1"/>
</dbReference>
<dbReference type="FunFam" id="3.30.200.210:FF:000002">
    <property type="entry name" value="NADH-ubiquinone oxidoreductase 75 kDa subunit"/>
    <property type="match status" value="1"/>
</dbReference>
<dbReference type="FunFam" id="3.30.70.20:FF:000002">
    <property type="entry name" value="NADH-ubiquinone oxidoreductase 75 kDa subunit"/>
    <property type="match status" value="1"/>
</dbReference>
<dbReference type="Gene3D" id="3.10.20.740">
    <property type="match status" value="1"/>
</dbReference>
<dbReference type="Gene3D" id="3.30.200.210">
    <property type="match status" value="1"/>
</dbReference>
<dbReference type="Gene3D" id="3.30.70.20">
    <property type="match status" value="1"/>
</dbReference>
<dbReference type="Gene3D" id="3.40.50.740">
    <property type="match status" value="1"/>
</dbReference>
<dbReference type="InterPro" id="IPR036010">
    <property type="entry name" value="2Fe-2S_ferredoxin-like_sf"/>
</dbReference>
<dbReference type="InterPro" id="IPR001041">
    <property type="entry name" value="2Fe-2S_ferredoxin-type"/>
</dbReference>
<dbReference type="InterPro" id="IPR006656">
    <property type="entry name" value="Mopterin_OxRdtase"/>
</dbReference>
<dbReference type="InterPro" id="IPR006963">
    <property type="entry name" value="Mopterin_OxRdtase_4Fe-4S_dom"/>
</dbReference>
<dbReference type="InterPro" id="IPR000283">
    <property type="entry name" value="NADH_UbQ_OxRdtase_75kDa_su_CS"/>
</dbReference>
<dbReference type="InterPro" id="IPR054351">
    <property type="entry name" value="NADH_UbQ_OxRdtase_ferredoxin"/>
</dbReference>
<dbReference type="InterPro" id="IPR010228">
    <property type="entry name" value="NADH_UbQ_OxRdtase_Gsu"/>
</dbReference>
<dbReference type="InterPro" id="IPR019574">
    <property type="entry name" value="NADH_UbQ_OxRdtase_Gsu_4Fe4S-bd"/>
</dbReference>
<dbReference type="InterPro" id="IPR015405">
    <property type="entry name" value="NDUFS1-like_C"/>
</dbReference>
<dbReference type="InterPro" id="IPR050123">
    <property type="entry name" value="Prok_molybdopt-oxidoreductase"/>
</dbReference>
<dbReference type="NCBIfam" id="TIGR01973">
    <property type="entry name" value="NuoG"/>
    <property type="match status" value="1"/>
</dbReference>
<dbReference type="PANTHER" id="PTHR43105:SF13">
    <property type="entry name" value="NADH-UBIQUINONE OXIDOREDUCTASE 75 KDA SUBUNIT, MITOCHONDRIAL"/>
    <property type="match status" value="1"/>
</dbReference>
<dbReference type="PANTHER" id="PTHR43105">
    <property type="entry name" value="RESPIRATORY NITRATE REDUCTASE"/>
    <property type="match status" value="1"/>
</dbReference>
<dbReference type="Pfam" id="PF13510">
    <property type="entry name" value="Fer2_4"/>
    <property type="match status" value="1"/>
</dbReference>
<dbReference type="Pfam" id="PF22151">
    <property type="entry name" value="Fer4_NDSU1"/>
    <property type="match status" value="1"/>
</dbReference>
<dbReference type="Pfam" id="PF22117">
    <property type="entry name" value="Fer4_Nqo3"/>
    <property type="match status" value="1"/>
</dbReference>
<dbReference type="Pfam" id="PF00384">
    <property type="entry name" value="Molybdopterin"/>
    <property type="match status" value="1"/>
</dbReference>
<dbReference type="Pfam" id="PF10588">
    <property type="entry name" value="NADH-G_4Fe-4S_3"/>
    <property type="match status" value="1"/>
</dbReference>
<dbReference type="Pfam" id="PF09326">
    <property type="entry name" value="NADH_dhqG_C"/>
    <property type="match status" value="1"/>
</dbReference>
<dbReference type="SMART" id="SM00929">
    <property type="entry name" value="NADH-G_4Fe-4S_3"/>
    <property type="match status" value="1"/>
</dbReference>
<dbReference type="SUPFAM" id="SSF54292">
    <property type="entry name" value="2Fe-2S ferredoxin-like"/>
    <property type="match status" value="1"/>
</dbReference>
<dbReference type="SUPFAM" id="SSF54862">
    <property type="entry name" value="4Fe-4S ferredoxins"/>
    <property type="match status" value="1"/>
</dbReference>
<dbReference type="SUPFAM" id="SSF53706">
    <property type="entry name" value="Formate dehydrogenase/DMSO reductase, domains 1-3"/>
    <property type="match status" value="1"/>
</dbReference>
<dbReference type="PROSITE" id="PS51085">
    <property type="entry name" value="2FE2S_FER_2"/>
    <property type="match status" value="1"/>
</dbReference>
<dbReference type="PROSITE" id="PS51839">
    <property type="entry name" value="4FE4S_HC3"/>
    <property type="match status" value="1"/>
</dbReference>
<dbReference type="PROSITE" id="PS51669">
    <property type="entry name" value="4FE4S_MOW_BIS_MGD"/>
    <property type="match status" value="1"/>
</dbReference>
<dbReference type="PROSITE" id="PS00641">
    <property type="entry name" value="COMPLEX1_75K_1"/>
    <property type="match status" value="1"/>
</dbReference>
<dbReference type="PROSITE" id="PS00642">
    <property type="entry name" value="COMPLEX1_75K_2"/>
    <property type="match status" value="1"/>
</dbReference>
<dbReference type="PROSITE" id="PS00643">
    <property type="entry name" value="COMPLEX1_75K_3"/>
    <property type="match status" value="1"/>
</dbReference>
<name>NUOG_RICBR</name>
<protein>
    <recommendedName>
        <fullName>NADH-quinone oxidoreductase subunit G</fullName>
        <ecNumber>7.1.1.-</ecNumber>
    </recommendedName>
    <alternativeName>
        <fullName>NADH dehydrogenase I subunit G</fullName>
    </alternativeName>
    <alternativeName>
        <fullName>NDH-1 subunit G</fullName>
    </alternativeName>
</protein>
<keyword id="KW-0001">2Fe-2S</keyword>
<keyword id="KW-0004">4Fe-4S</keyword>
<keyword id="KW-0408">Iron</keyword>
<keyword id="KW-0411">Iron-sulfur</keyword>
<keyword id="KW-0479">Metal-binding</keyword>
<keyword id="KW-0520">NAD</keyword>
<keyword id="KW-0874">Quinone</keyword>
<keyword id="KW-1278">Translocase</keyword>
<evidence type="ECO:0000250" key="1"/>
<evidence type="ECO:0000255" key="2">
    <source>
        <dbReference type="PROSITE-ProRule" id="PRU00465"/>
    </source>
</evidence>
<evidence type="ECO:0000255" key="3">
    <source>
        <dbReference type="PROSITE-ProRule" id="PRU01004"/>
    </source>
</evidence>
<evidence type="ECO:0000255" key="4">
    <source>
        <dbReference type="PROSITE-ProRule" id="PRU01184"/>
    </source>
</evidence>
<evidence type="ECO:0000305" key="5"/>
<comment type="function">
    <text evidence="1">NDH-1 shuttles electrons from NADH, via FMN and iron-sulfur (Fe-S) centers, to quinones in the respiratory chain. Couples the redox reaction to proton translocation (for every two electrons transferred, four hydrogen ions are translocated across the cytoplasmic membrane), and thus conserves the redox energy in a proton gradient (By similarity).</text>
</comment>
<comment type="catalytic activity">
    <reaction>
        <text>a quinone + NADH + 5 H(+)(in) = a quinol + NAD(+) + 4 H(+)(out)</text>
        <dbReference type="Rhea" id="RHEA:57888"/>
        <dbReference type="ChEBI" id="CHEBI:15378"/>
        <dbReference type="ChEBI" id="CHEBI:24646"/>
        <dbReference type="ChEBI" id="CHEBI:57540"/>
        <dbReference type="ChEBI" id="CHEBI:57945"/>
        <dbReference type="ChEBI" id="CHEBI:132124"/>
    </reaction>
</comment>
<comment type="cofactor">
    <cofactor evidence="1">
        <name>[2Fe-2S] cluster</name>
        <dbReference type="ChEBI" id="CHEBI:190135"/>
    </cofactor>
    <text evidence="1">Binds 1 [2Fe-2S] cluster per subunit.</text>
</comment>
<comment type="cofactor">
    <cofactor evidence="1">
        <name>[4Fe-4S] cluster</name>
        <dbReference type="ChEBI" id="CHEBI:49883"/>
    </cofactor>
    <text evidence="1">Binds 2 [4Fe-4S] clusters per subunit.</text>
</comment>
<comment type="similarity">
    <text evidence="5">Belongs to the complex I 75 kDa subunit family.</text>
</comment>